<sequence>MSSGKKAVKVKTPAGKEAELVPEKVWALAPKGRKGVKIGLFKDPETGKYFRHKLPDDYPI</sequence>
<name>CREN7_SACI3</name>
<keyword id="KW-0158">Chromosome</keyword>
<keyword id="KW-0963">Cytoplasm</keyword>
<keyword id="KW-0238">DNA-binding</keyword>
<keyword id="KW-0488">Methylation</keyword>
<comment type="function">
    <text evidence="1">A chromatin protein, binds double-stranded DNA without sequence specificity. Constrains negative DNA supercoils.</text>
</comment>
<comment type="subunit">
    <text evidence="1">Monomer.</text>
</comment>
<comment type="subcellular location">
    <subcellularLocation>
        <location evidence="1">Chromosome</location>
    </subcellularLocation>
    <subcellularLocation>
        <location evidence="1">Cytoplasm</location>
    </subcellularLocation>
</comment>
<comment type="PTM">
    <text evidence="1">Methylated at multiple sites, to varying extents.</text>
</comment>
<comment type="similarity">
    <text evidence="1">Belongs to the Cren7 family.</text>
</comment>
<gene>
    <name evidence="1" type="primary">creN7</name>
    <name type="ordered locus">M1627_1298</name>
</gene>
<evidence type="ECO:0000255" key="1">
    <source>
        <dbReference type="HAMAP-Rule" id="MF_01387"/>
    </source>
</evidence>
<feature type="chain" id="PRO_1000215130" description="Chromatin protein Cren7">
    <location>
        <begin position="1"/>
        <end position="60"/>
    </location>
</feature>
<organism>
    <name type="scientific">Saccharolobus islandicus (strain M.16.27)</name>
    <name type="common">Sulfolobus islandicus</name>
    <dbReference type="NCBI Taxonomy" id="427318"/>
    <lineage>
        <taxon>Archaea</taxon>
        <taxon>Thermoproteota</taxon>
        <taxon>Thermoprotei</taxon>
        <taxon>Sulfolobales</taxon>
        <taxon>Sulfolobaceae</taxon>
        <taxon>Saccharolobus</taxon>
    </lineage>
</organism>
<proteinExistence type="inferred from homology"/>
<reference key="1">
    <citation type="journal article" date="2009" name="Proc. Natl. Acad. Sci. U.S.A.">
        <title>Biogeography of the Sulfolobus islandicus pan-genome.</title>
        <authorList>
            <person name="Reno M.L."/>
            <person name="Held N.L."/>
            <person name="Fields C.J."/>
            <person name="Burke P.V."/>
            <person name="Whitaker R.J."/>
        </authorList>
    </citation>
    <scope>NUCLEOTIDE SEQUENCE [LARGE SCALE GENOMIC DNA]</scope>
    <source>
        <strain>M.16.27</strain>
    </source>
</reference>
<accession>C3N5A6</accession>
<protein>
    <recommendedName>
        <fullName evidence="1">Chromatin protein Cren7</fullName>
    </recommendedName>
</protein>
<dbReference type="EMBL" id="CP001401">
    <property type="protein sequence ID" value="ACP55181.1"/>
    <property type="molecule type" value="Genomic_DNA"/>
</dbReference>
<dbReference type="RefSeq" id="WP_012711256.1">
    <property type="nucleotide sequence ID" value="NC_012632.1"/>
</dbReference>
<dbReference type="BMRB" id="C3N5A6"/>
<dbReference type="SMR" id="C3N5A6"/>
<dbReference type="GeneID" id="84061563"/>
<dbReference type="KEGG" id="sim:M1627_1298"/>
<dbReference type="HOGENOM" id="CLU_2911298_0_0_2"/>
<dbReference type="Proteomes" id="UP000002307">
    <property type="component" value="Chromosome"/>
</dbReference>
<dbReference type="GO" id="GO:0005694">
    <property type="term" value="C:chromosome"/>
    <property type="evidence" value="ECO:0007669"/>
    <property type="project" value="UniProtKB-SubCell"/>
</dbReference>
<dbReference type="GO" id="GO:0005737">
    <property type="term" value="C:cytoplasm"/>
    <property type="evidence" value="ECO:0007669"/>
    <property type="project" value="UniProtKB-SubCell"/>
</dbReference>
<dbReference type="GO" id="GO:0003690">
    <property type="term" value="F:double-stranded DNA binding"/>
    <property type="evidence" value="ECO:0007669"/>
    <property type="project" value="UniProtKB-UniRule"/>
</dbReference>
<dbReference type="Gene3D" id="2.30.30.610">
    <property type="entry name" value="Chromatin protein Cren7"/>
    <property type="match status" value="1"/>
</dbReference>
<dbReference type="HAMAP" id="MF_01387">
    <property type="entry name" value="Chromatin_Cren7"/>
    <property type="match status" value="1"/>
</dbReference>
<dbReference type="InterPro" id="IPR038647">
    <property type="entry name" value="Cren7_sf"/>
</dbReference>
<dbReference type="InterPro" id="IPR020906">
    <property type="entry name" value="dsDNA-bd_Cren7"/>
</dbReference>
<dbReference type="Pfam" id="PF11520">
    <property type="entry name" value="Cren7"/>
    <property type="match status" value="1"/>
</dbReference>